<organism>
    <name type="scientific">Aspergillus clavatus (strain ATCC 1007 / CBS 513.65 / DSM 816 / NCTC 3887 / NRRL 1 / QM 1276 / 107)</name>
    <dbReference type="NCBI Taxonomy" id="344612"/>
    <lineage>
        <taxon>Eukaryota</taxon>
        <taxon>Fungi</taxon>
        <taxon>Dikarya</taxon>
        <taxon>Ascomycota</taxon>
        <taxon>Pezizomycotina</taxon>
        <taxon>Eurotiomycetes</taxon>
        <taxon>Eurotiomycetidae</taxon>
        <taxon>Eurotiales</taxon>
        <taxon>Aspergillaceae</taxon>
        <taxon>Aspergillus</taxon>
        <taxon>Aspergillus subgen. Fumigati</taxon>
    </lineage>
</organism>
<proteinExistence type="inferred from homology"/>
<feature type="chain" id="PRO_0000438562" description="Cytochalasin cluster regulator ccsR">
    <location>
        <begin position="1"/>
        <end position="534"/>
    </location>
</feature>
<feature type="DNA-binding region" description="Zn(2)-C6 fungal-type" evidence="1">
    <location>
        <begin position="13"/>
        <end position="54"/>
    </location>
</feature>
<feature type="region of interest" description="Disordered" evidence="2">
    <location>
        <begin position="88"/>
        <end position="170"/>
    </location>
</feature>
<feature type="region of interest" description="Disordered" evidence="2">
    <location>
        <begin position="350"/>
        <end position="378"/>
    </location>
</feature>
<feature type="compositionally biased region" description="Polar residues" evidence="2">
    <location>
        <begin position="109"/>
        <end position="125"/>
    </location>
</feature>
<feature type="compositionally biased region" description="Basic and acidic residues" evidence="2">
    <location>
        <begin position="130"/>
        <end position="146"/>
    </location>
</feature>
<feature type="compositionally biased region" description="Low complexity" evidence="2">
    <location>
        <begin position="361"/>
        <end position="378"/>
    </location>
</feature>
<comment type="function">
    <text evidence="3">Transcription factor involved in regulation of gene cluster that mediates the biosynthesis of the mycotoxins cytochalasins E and K (PubMed:21983160).</text>
</comment>
<comment type="subcellular location">
    <subcellularLocation>
        <location evidence="1">Nucleus</location>
    </subcellularLocation>
</comment>
<comment type="sequence caution" evidence="5">
    <conflict type="erroneous initiation">
        <sequence resource="EMBL-CDS" id="EAW09115"/>
    </conflict>
    <text>Truncated N-terminus.</text>
</comment>
<sequence>MVRNMDLYRRSACDRCRRQKLRCVRPLKHGACEHPNNIEALEPCERCSRAGTPCVSTLPPPRKLSRVERLSGLTSVGQLDNLPLQPLIPKQASSHRPGSGSAKSCIPPTGQNKGINDANAVTGSLSMPLPDHRSGSNVHRQPEARPLKRRSRDIHPFGTGSPPTELLDAPSFSTRRSPIFSQAEPFALNDLDFAMQPHSGGDLPSHGDDLFADVLFSPHQKPPAGPTVGESLFDNTKAQELDTRECCLRRLTSLSSRLFHDFNNTNSVKLPDLLSFSPCRNLTAPNQATDCPQNIIGRVLESSHTFLDILHGLAPDPRPTSSSDSECSYSNYWEDDEFVPISDEMTYNSTSARPEFRDSSDMCASSSNRDSSDLSAASPTIDMPTTLTILTCYTWLLQAYDTIFSQIYSSLLAGTDSTSPSMPPVLPGLQIGGFSLDQHCDLQIEILIQLSARMLDRIEGKLGVTDTKDSNAPVDDQEWSRNGSILDTASASTILDALFKQNHSETRAKPGKGARAGSVRNIMKNIRAELTVHK</sequence>
<accession>A1CLY6</accession>
<keyword id="KW-0238">DNA-binding</keyword>
<keyword id="KW-0479">Metal-binding</keyword>
<keyword id="KW-0539">Nucleus</keyword>
<keyword id="KW-1185">Reference proteome</keyword>
<keyword id="KW-0804">Transcription</keyword>
<keyword id="KW-0805">Transcription regulation</keyword>
<keyword id="KW-0862">Zinc</keyword>
<gene>
    <name evidence="4" type="primary">ccsR</name>
    <name type="ORF">ACLA_078640</name>
</gene>
<protein>
    <recommendedName>
        <fullName evidence="4">Cytochalasin cluster regulator ccsR</fullName>
    </recommendedName>
    <alternativeName>
        <fullName evidence="4">Cytochalasin biosynthesis protein R</fullName>
    </alternativeName>
</protein>
<dbReference type="EMBL" id="DS027057">
    <property type="protein sequence ID" value="EAW09115.1"/>
    <property type="status" value="ALT_INIT"/>
    <property type="molecule type" value="Genomic_DNA"/>
</dbReference>
<dbReference type="RefSeq" id="XP_001270541.1">
    <property type="nucleotide sequence ID" value="XM_001270540.1"/>
</dbReference>
<dbReference type="STRING" id="344612.A1CLY6"/>
<dbReference type="EnsemblFungi" id="EAW09115">
    <property type="protein sequence ID" value="EAW09115"/>
    <property type="gene ID" value="ACLA_078640"/>
</dbReference>
<dbReference type="GeneID" id="4702674"/>
<dbReference type="KEGG" id="act:ACLA_078640"/>
<dbReference type="eggNOG" id="ENOG502SX45">
    <property type="taxonomic scope" value="Eukaryota"/>
</dbReference>
<dbReference type="HOGENOM" id="CLU_674351_0_0_1"/>
<dbReference type="OrthoDB" id="4222821at2759"/>
<dbReference type="Proteomes" id="UP000006701">
    <property type="component" value="Unassembled WGS sequence"/>
</dbReference>
<dbReference type="GO" id="GO:0005634">
    <property type="term" value="C:nucleus"/>
    <property type="evidence" value="ECO:0007669"/>
    <property type="project" value="UniProtKB-SubCell"/>
</dbReference>
<dbReference type="GO" id="GO:0003677">
    <property type="term" value="F:DNA binding"/>
    <property type="evidence" value="ECO:0007669"/>
    <property type="project" value="UniProtKB-KW"/>
</dbReference>
<dbReference type="GO" id="GO:0000981">
    <property type="term" value="F:DNA-binding transcription factor activity, RNA polymerase II-specific"/>
    <property type="evidence" value="ECO:0007669"/>
    <property type="project" value="InterPro"/>
</dbReference>
<dbReference type="GO" id="GO:0008270">
    <property type="term" value="F:zinc ion binding"/>
    <property type="evidence" value="ECO:0007669"/>
    <property type="project" value="InterPro"/>
</dbReference>
<dbReference type="CDD" id="cd00067">
    <property type="entry name" value="GAL4"/>
    <property type="match status" value="1"/>
</dbReference>
<dbReference type="Gene3D" id="4.10.240.10">
    <property type="entry name" value="Zn(2)-C6 fungal-type DNA-binding domain"/>
    <property type="match status" value="1"/>
</dbReference>
<dbReference type="InterPro" id="IPR036864">
    <property type="entry name" value="Zn2-C6_fun-type_DNA-bd_sf"/>
</dbReference>
<dbReference type="InterPro" id="IPR001138">
    <property type="entry name" value="Zn2Cys6_DnaBD"/>
</dbReference>
<dbReference type="SMART" id="SM00066">
    <property type="entry name" value="GAL4"/>
    <property type="match status" value="1"/>
</dbReference>
<dbReference type="SUPFAM" id="SSF57701">
    <property type="entry name" value="Zn2/Cys6 DNA-binding domain"/>
    <property type="match status" value="1"/>
</dbReference>
<dbReference type="PROSITE" id="PS50048">
    <property type="entry name" value="ZN2_CY6_FUNGAL_2"/>
    <property type="match status" value="1"/>
</dbReference>
<evidence type="ECO:0000255" key="1">
    <source>
        <dbReference type="PROSITE-ProRule" id="PRU00227"/>
    </source>
</evidence>
<evidence type="ECO:0000256" key="2">
    <source>
        <dbReference type="SAM" id="MobiDB-lite"/>
    </source>
</evidence>
<evidence type="ECO:0000269" key="3">
    <source>
    </source>
</evidence>
<evidence type="ECO:0000303" key="4">
    <source>
    </source>
</evidence>
<evidence type="ECO:0000305" key="5"/>
<name>CCSR_ASPCL</name>
<reference key="1">
    <citation type="journal article" date="2008" name="PLoS Genet.">
        <title>Genomic islands in the pathogenic filamentous fungus Aspergillus fumigatus.</title>
        <authorList>
            <person name="Fedorova N.D."/>
            <person name="Khaldi N."/>
            <person name="Joardar V.S."/>
            <person name="Maiti R."/>
            <person name="Amedeo P."/>
            <person name="Anderson M.J."/>
            <person name="Crabtree J."/>
            <person name="Silva J.C."/>
            <person name="Badger J.H."/>
            <person name="Albarraq A."/>
            <person name="Angiuoli S."/>
            <person name="Bussey H."/>
            <person name="Bowyer P."/>
            <person name="Cotty P.J."/>
            <person name="Dyer P.S."/>
            <person name="Egan A."/>
            <person name="Galens K."/>
            <person name="Fraser-Liggett C.M."/>
            <person name="Haas B.J."/>
            <person name="Inman J.M."/>
            <person name="Kent R."/>
            <person name="Lemieux S."/>
            <person name="Malavazi I."/>
            <person name="Orvis J."/>
            <person name="Roemer T."/>
            <person name="Ronning C.M."/>
            <person name="Sundaram J.P."/>
            <person name="Sutton G."/>
            <person name="Turner G."/>
            <person name="Venter J.C."/>
            <person name="White O.R."/>
            <person name="Whitty B.R."/>
            <person name="Youngman P."/>
            <person name="Wolfe K.H."/>
            <person name="Goldman G.H."/>
            <person name="Wortman J.R."/>
            <person name="Jiang B."/>
            <person name="Denning D.W."/>
            <person name="Nierman W.C."/>
        </authorList>
    </citation>
    <scope>NUCLEOTIDE SEQUENCE [LARGE SCALE GENOMIC DNA]</scope>
    <source>
        <strain>ATCC 1007 / CBS 513.65 / DSM 816 / NCTC 3887 / NRRL 1 / QM 1276 / 107</strain>
    </source>
</reference>
<reference key="2">
    <citation type="journal article" date="2011" name="Metab. Eng.">
        <title>Identification and engineering of the cytochalasin gene cluster from Aspergillus clavatus NRRL 1.</title>
        <authorList>
            <person name="Qiao K."/>
            <person name="Chooi Y.H."/>
            <person name="Tang Y."/>
        </authorList>
    </citation>
    <scope>FUNCTION</scope>
    <source>
        <strain>ATCC 1007 / CBS 513.65 / DSM 816 / NCTC 3887 / NRRL 1</strain>
    </source>
</reference>